<proteinExistence type="inferred from homology"/>
<keyword id="KW-0238">DNA-binding</keyword>
<keyword id="KW-0479">Metal-binding</keyword>
<keyword id="KW-0539">Nucleus</keyword>
<keyword id="KW-1185">Reference proteome</keyword>
<keyword id="KW-0804">Transcription</keyword>
<keyword id="KW-0805">Transcription regulation</keyword>
<keyword id="KW-0862">Zinc</keyword>
<name>NSCR_ARTBC</name>
<accession>D4AWG9</accession>
<protein>
    <recommendedName>
        <fullName evidence="2">C6 finger domain transcription factor nscR</fullName>
    </recommendedName>
    <alternativeName>
        <fullName evidence="2">Neosartiricin B biosynthesis protein R</fullName>
    </alternativeName>
</protein>
<gene>
    <name evidence="2" type="primary">nscR</name>
    <name type="ORF">ARB_00534</name>
</gene>
<sequence>MEKRGPKRRQEAAHLSCELCRERKVKCDKLDPCTNCSSAGVICVPVRRPRLPRGAHAQRLRRISPEDPEAPIQIDIAPPADAGTIADDDLKERIRRLEALVDSMRSSNHISKQLIKNFQTNKDQEAQDTIESTLNGIDEDSLLIKGPRVHPSDGGLRILGLSGSSSPETGWASIIEDREISMQLCQVYLLNVDPVIKILHRPSLEKWMLQGQRYLGLPEGHAAVESLGAAICYVAATSLTETQSWARFHTTKSSIVARARRACETTLEKSSPLLSPDVTTLQAFVLYLVARRSEDPSRAVWTLMAFAVRIAKALDLPRVTDDNFFDQQMRKRLWLAICLLDFQTSLSQPSEPLITVVEATSSFSPPRHINDSDFDPTTSHDIPDREGLTDTTFSLVSYHVQAAGRLLNFEPCVKDDGSRQQHVQHFEQRTLRLLLYCDPESTPYAWFTWHRIQCFVSGARLSAIRPLLHQHRDHPIPILDANEGTSILSLALNILEKVQLVHTDPRGERFRWFVTVPWQPLAIAISECYICQDRSLVQRAWPIVEAAFQQHEAAVSGSSKAISITLERLMCRVRGKLLPSLGTSTSITTSPTFGTTDAANALSVPHTPPSRSSIISNGDLLSNWSWTTAELSRPGEELALVTEAPVSTSPQKVDPLLLSLDSPLLIAGQEQLVEADQSWAAWEERIAIGEEERRQEKKEKH</sequence>
<reference key="1">
    <citation type="journal article" date="2011" name="Genome Biol.">
        <title>Comparative and functional genomics provide insights into the pathogenicity of dermatophytic fungi.</title>
        <authorList>
            <person name="Burmester A."/>
            <person name="Shelest E."/>
            <person name="Gloeckner G."/>
            <person name="Heddergott C."/>
            <person name="Schindler S."/>
            <person name="Staib P."/>
            <person name="Heidel A."/>
            <person name="Felder M."/>
            <person name="Petzold A."/>
            <person name="Szafranski K."/>
            <person name="Feuermann M."/>
            <person name="Pedruzzi I."/>
            <person name="Priebe S."/>
            <person name="Groth M."/>
            <person name="Winkler R."/>
            <person name="Li W."/>
            <person name="Kniemeyer O."/>
            <person name="Schroeckh V."/>
            <person name="Hertweck C."/>
            <person name="Hube B."/>
            <person name="White T.C."/>
            <person name="Platzer M."/>
            <person name="Guthke R."/>
            <person name="Heitman J."/>
            <person name="Woestemeyer J."/>
            <person name="Zipfel P.F."/>
            <person name="Monod M."/>
            <person name="Brakhage A.A."/>
        </authorList>
    </citation>
    <scope>NUCLEOTIDE SEQUENCE [LARGE SCALE GENOMIC DNA]</scope>
    <source>
        <strain>ATCC MYA-4681 / CBS 112371</strain>
    </source>
</reference>
<reference key="2">
    <citation type="journal article" date="2013" name="ACS Synth. Biol.">
        <title>Discovery of cryptic polyketide metabolites from dermatophytes using heterologous expression in Aspergillus nidulans.</title>
        <authorList>
            <person name="Yin W.B."/>
            <person name="Chooi Y.H."/>
            <person name="Smith A.R."/>
            <person name="Cacho R.A."/>
            <person name="Hu Y."/>
            <person name="White T.C."/>
            <person name="Tang Y."/>
        </authorList>
    </citation>
    <scope>FUNCTION</scope>
</reference>
<feature type="chain" id="PRO_0000437928" description="C6 finger domain transcription factor nscR">
    <location>
        <begin position="1"/>
        <end position="701"/>
    </location>
</feature>
<feature type="DNA-binding region" description="Zn(2)-C6 fungal-type" evidence="1">
    <location>
        <begin position="17"/>
        <end position="43"/>
    </location>
</feature>
<dbReference type="EMBL" id="ABSU01000014">
    <property type="protein sequence ID" value="EFE32709.1"/>
    <property type="molecule type" value="Genomic_DNA"/>
</dbReference>
<dbReference type="RefSeq" id="XP_003013349.1">
    <property type="nucleotide sequence ID" value="XM_003013303.1"/>
</dbReference>
<dbReference type="STRING" id="663331.D4AWG9"/>
<dbReference type="GeneID" id="9519384"/>
<dbReference type="KEGG" id="abe:ARB_00534"/>
<dbReference type="eggNOG" id="ENOG502SHJA">
    <property type="taxonomic scope" value="Eukaryota"/>
</dbReference>
<dbReference type="HOGENOM" id="CLU_004083_7_1_1"/>
<dbReference type="OMA" id="LMHTDPR"/>
<dbReference type="Proteomes" id="UP000008866">
    <property type="component" value="Unassembled WGS sequence"/>
</dbReference>
<dbReference type="GO" id="GO:0005634">
    <property type="term" value="C:nucleus"/>
    <property type="evidence" value="ECO:0007669"/>
    <property type="project" value="UniProtKB-SubCell"/>
</dbReference>
<dbReference type="GO" id="GO:0003677">
    <property type="term" value="F:DNA binding"/>
    <property type="evidence" value="ECO:0007669"/>
    <property type="project" value="UniProtKB-KW"/>
</dbReference>
<dbReference type="GO" id="GO:0000981">
    <property type="term" value="F:DNA-binding transcription factor activity, RNA polymerase II-specific"/>
    <property type="evidence" value="ECO:0007669"/>
    <property type="project" value="InterPro"/>
</dbReference>
<dbReference type="GO" id="GO:0008270">
    <property type="term" value="F:zinc ion binding"/>
    <property type="evidence" value="ECO:0007669"/>
    <property type="project" value="InterPro"/>
</dbReference>
<dbReference type="GO" id="GO:0006351">
    <property type="term" value="P:DNA-templated transcription"/>
    <property type="evidence" value="ECO:0007669"/>
    <property type="project" value="InterPro"/>
</dbReference>
<dbReference type="CDD" id="cd12148">
    <property type="entry name" value="fungal_TF_MHR"/>
    <property type="match status" value="1"/>
</dbReference>
<dbReference type="CDD" id="cd00067">
    <property type="entry name" value="GAL4"/>
    <property type="match status" value="1"/>
</dbReference>
<dbReference type="Gene3D" id="4.10.240.10">
    <property type="entry name" value="Zn(2)-C6 fungal-type DNA-binding domain"/>
    <property type="match status" value="1"/>
</dbReference>
<dbReference type="InterPro" id="IPR050613">
    <property type="entry name" value="Sec_Metabolite_Reg"/>
</dbReference>
<dbReference type="InterPro" id="IPR007219">
    <property type="entry name" value="Transcription_factor_dom_fun"/>
</dbReference>
<dbReference type="InterPro" id="IPR036864">
    <property type="entry name" value="Zn2-C6_fun-type_DNA-bd_sf"/>
</dbReference>
<dbReference type="InterPro" id="IPR001138">
    <property type="entry name" value="Zn2Cys6_DnaBD"/>
</dbReference>
<dbReference type="PANTHER" id="PTHR31001">
    <property type="entry name" value="UNCHARACTERIZED TRANSCRIPTIONAL REGULATORY PROTEIN"/>
    <property type="match status" value="1"/>
</dbReference>
<dbReference type="PANTHER" id="PTHR31001:SF50">
    <property type="entry name" value="ZN(II)2CYS6 TRANSCRIPTION FACTOR (EUROFUNG)"/>
    <property type="match status" value="1"/>
</dbReference>
<dbReference type="Pfam" id="PF04082">
    <property type="entry name" value="Fungal_trans"/>
    <property type="match status" value="1"/>
</dbReference>
<dbReference type="Pfam" id="PF00172">
    <property type="entry name" value="Zn_clus"/>
    <property type="match status" value="1"/>
</dbReference>
<dbReference type="SMART" id="SM00066">
    <property type="entry name" value="GAL4"/>
    <property type="match status" value="1"/>
</dbReference>
<dbReference type="SUPFAM" id="SSF57701">
    <property type="entry name" value="Zn2/Cys6 DNA-binding domain"/>
    <property type="match status" value="1"/>
</dbReference>
<dbReference type="PROSITE" id="PS00463">
    <property type="entry name" value="ZN2_CY6_FUNGAL_1"/>
    <property type="match status" value="1"/>
</dbReference>
<dbReference type="PROSITE" id="PS50048">
    <property type="entry name" value="ZN2_CY6_FUNGAL_2"/>
    <property type="match status" value="1"/>
</dbReference>
<organism>
    <name type="scientific">Arthroderma benhamiae (strain ATCC MYA-4681 / CBS 112371)</name>
    <name type="common">Trichophyton mentagrophytes</name>
    <dbReference type="NCBI Taxonomy" id="663331"/>
    <lineage>
        <taxon>Eukaryota</taxon>
        <taxon>Fungi</taxon>
        <taxon>Dikarya</taxon>
        <taxon>Ascomycota</taxon>
        <taxon>Pezizomycotina</taxon>
        <taxon>Eurotiomycetes</taxon>
        <taxon>Eurotiomycetidae</taxon>
        <taxon>Onygenales</taxon>
        <taxon>Arthrodermataceae</taxon>
        <taxon>Trichophyton</taxon>
    </lineage>
</organism>
<comment type="function">
    <text evidence="3">Transcription factor that specifically regulates the neosartoricin B biosynthesis gene cluster (PubMed:23758576).</text>
</comment>
<comment type="subcellular location">
    <subcellularLocation>
        <location evidence="1">Nucleus</location>
    </subcellularLocation>
</comment>
<evidence type="ECO:0000255" key="1">
    <source>
        <dbReference type="PROSITE-ProRule" id="PRU00227"/>
    </source>
</evidence>
<evidence type="ECO:0000303" key="2">
    <source>
    </source>
</evidence>
<evidence type="ECO:0000305" key="3">
    <source>
    </source>
</evidence>